<feature type="chain" id="PRO_0000207892" description="Protein PsbN">
    <location>
        <begin position="1"/>
        <end position="43"/>
    </location>
</feature>
<feature type="transmembrane region" description="Helical" evidence="1">
    <location>
        <begin position="5"/>
        <end position="25"/>
    </location>
</feature>
<protein>
    <recommendedName>
        <fullName evidence="1">Protein PsbN</fullName>
    </recommendedName>
</protein>
<organism>
    <name type="scientific">Cyanidioschyzon merolae (strain NIES-3377 / 10D)</name>
    <name type="common">Unicellular red alga</name>
    <dbReference type="NCBI Taxonomy" id="280699"/>
    <lineage>
        <taxon>Eukaryota</taxon>
        <taxon>Rhodophyta</taxon>
        <taxon>Bangiophyceae</taxon>
        <taxon>Cyanidiales</taxon>
        <taxon>Cyanidiaceae</taxon>
        <taxon>Cyanidioschyzon</taxon>
    </lineage>
</organism>
<keyword id="KW-0150">Chloroplast</keyword>
<keyword id="KW-0472">Membrane</keyword>
<keyword id="KW-0934">Plastid</keyword>
<keyword id="KW-1185">Reference proteome</keyword>
<keyword id="KW-0793">Thylakoid</keyword>
<keyword id="KW-0812">Transmembrane</keyword>
<keyword id="KW-1133">Transmembrane helix</keyword>
<geneLocation type="chloroplast"/>
<sequence>MQNATLISVFVASLVIGITAYAIFVSFGPSARNLRDPFEEHED</sequence>
<accession>Q85FZ3</accession>
<evidence type="ECO:0000255" key="1">
    <source>
        <dbReference type="HAMAP-Rule" id="MF_00293"/>
    </source>
</evidence>
<comment type="function">
    <text evidence="1">May play a role in photosystem I and II biogenesis.</text>
</comment>
<comment type="subcellular location">
    <subcellularLocation>
        <location evidence="1">Plastid</location>
        <location evidence="1">Chloroplast thylakoid membrane</location>
        <topology evidence="1">Single-pass membrane protein</topology>
    </subcellularLocation>
</comment>
<comment type="similarity">
    <text evidence="1">Belongs to the PsbN family.</text>
</comment>
<comment type="caution">
    <text evidence="1">Originally thought to be a component of PSII; based on experiments in Synechocystis, N.tabacum and barley, and its absence from PSII in T.elongatus and T.vulcanus, this is probably not true.</text>
</comment>
<proteinExistence type="inferred from homology"/>
<gene>
    <name evidence="1" type="primary">psbN</name>
</gene>
<name>PSBN_CYAM1</name>
<dbReference type="EMBL" id="AB002583">
    <property type="protein sequence ID" value="BAC76199.1"/>
    <property type="molecule type" value="Genomic_DNA"/>
</dbReference>
<dbReference type="RefSeq" id="NP_849037.1">
    <property type="nucleotide sequence ID" value="NC_004799.1"/>
</dbReference>
<dbReference type="SMR" id="Q85FZ3"/>
<dbReference type="STRING" id="280699.Q85FZ3"/>
<dbReference type="EnsemblPlants" id="CMV126CT">
    <property type="protein sequence ID" value="CMV126CT"/>
    <property type="gene ID" value="CMV126C"/>
</dbReference>
<dbReference type="GeneID" id="844957"/>
<dbReference type="Gramene" id="CMV126CT">
    <property type="protein sequence ID" value="CMV126CT"/>
    <property type="gene ID" value="CMV126C"/>
</dbReference>
<dbReference type="KEGG" id="cme:CymeCp105"/>
<dbReference type="eggNOG" id="ENOG502S8EW">
    <property type="taxonomic scope" value="Eukaryota"/>
</dbReference>
<dbReference type="HOGENOM" id="CLU_205504_0_0_1"/>
<dbReference type="Proteomes" id="UP000007014">
    <property type="component" value="Chloroplast"/>
</dbReference>
<dbReference type="GO" id="GO:0009535">
    <property type="term" value="C:chloroplast thylakoid membrane"/>
    <property type="evidence" value="ECO:0007669"/>
    <property type="project" value="UniProtKB-SubCell"/>
</dbReference>
<dbReference type="GO" id="GO:0015979">
    <property type="term" value="P:photosynthesis"/>
    <property type="evidence" value="ECO:0007669"/>
    <property type="project" value="InterPro"/>
</dbReference>
<dbReference type="HAMAP" id="MF_00293">
    <property type="entry name" value="PSII_PsbN"/>
    <property type="match status" value="1"/>
</dbReference>
<dbReference type="InterPro" id="IPR003398">
    <property type="entry name" value="PSII_PsbN"/>
</dbReference>
<dbReference type="PANTHER" id="PTHR35326">
    <property type="entry name" value="PROTEIN PSBN"/>
    <property type="match status" value="1"/>
</dbReference>
<dbReference type="PANTHER" id="PTHR35326:SF3">
    <property type="entry name" value="PROTEIN PSBN"/>
    <property type="match status" value="1"/>
</dbReference>
<dbReference type="Pfam" id="PF02468">
    <property type="entry name" value="PsbN"/>
    <property type="match status" value="1"/>
</dbReference>
<reference key="1">
    <citation type="journal article" date="2003" name="DNA Res.">
        <title>Complete sequence and analysis of the plastid genome of the unicellular red alga Cyanidioschyzon merolae.</title>
        <authorList>
            <person name="Ohta N."/>
            <person name="Matsuzaki M."/>
            <person name="Misumi O."/>
            <person name="Miyagishima S.-Y."/>
            <person name="Nozaki H."/>
            <person name="Tanaka K."/>
            <person name="Shin-i T."/>
            <person name="Kohara Y."/>
            <person name="Kuroiwa T."/>
        </authorList>
    </citation>
    <scope>NUCLEOTIDE SEQUENCE [LARGE SCALE GENOMIC DNA]</scope>
    <source>
        <strain>NIES-3377 / 10D</strain>
    </source>
</reference>